<accession>P58926</accession>
<organism>
    <name type="scientific">Conus pennaceus</name>
    <name type="common">Feathered cone</name>
    <name type="synonym">Conus episcopus</name>
    <dbReference type="NCBI Taxonomy" id="37335"/>
    <lineage>
        <taxon>Eukaryota</taxon>
        <taxon>Metazoa</taxon>
        <taxon>Spiralia</taxon>
        <taxon>Lophotrochozoa</taxon>
        <taxon>Mollusca</taxon>
        <taxon>Gastropoda</taxon>
        <taxon>Caenogastropoda</taxon>
        <taxon>Neogastropoda</taxon>
        <taxon>Conoidea</taxon>
        <taxon>Conidae</taxon>
        <taxon>Conus</taxon>
        <taxon>Darioconus</taxon>
    </lineage>
</organism>
<protein>
    <recommendedName>
        <fullName>Mu-conotoxin PnIVA</fullName>
    </recommendedName>
</protein>
<comment type="function">
    <text>Mu-conotoxins block voltage-gated sodium channels (Nav). Blocks reversibly sodium channels in molluskan neurons, but has no effect on sodium currents in bovine chromaffin cells or in rat brain synaptosomes. Induces paralysis in bivalve mollusks (Mytilus). No effect are observed on fish (Gambusia) and fly larvae (Sarcophaga). PnIVB is approximately 6 times more potent than PnIVA in blockade of the sodium current in Lymnaea neurons.</text>
</comment>
<comment type="subcellular location">
    <subcellularLocation>
        <location>Secreted</location>
    </subcellularLocation>
</comment>
<comment type="tissue specificity">
    <text>Expressed by the venom duct.</text>
</comment>
<comment type="domain">
    <text>The cysteine framework is IV (CC-C-C-C-C).</text>
</comment>
<comment type="PTM">
    <text evidence="1">Contains 3 disulfide bonds (By similarity). They are not added, since framework IV presents two different connectivities (I-V, II-III, IV-VI and I-III, II-V, IV-VI).</text>
</comment>
<comment type="mass spectrometry" mass="1789.5" method="LSI" evidence="2"/>
<comment type="similarity">
    <text evidence="3">Belongs to the conotoxin M superfamily.</text>
</comment>
<reference key="1">
    <citation type="journal article" date="1995" name="Biochemistry">
        <title>A new cysteine framework in sodium channel blocking conotoxins.</title>
        <authorList>
            <person name="Fainzilber M."/>
            <person name="Nakamura T."/>
            <person name="Gaathon A."/>
            <person name="Lodder J.C."/>
            <person name="Kits K.S."/>
            <person name="Burlingame A.L."/>
            <person name="Zlotkin E."/>
        </authorList>
    </citation>
    <scope>PROTEIN SEQUENCE</scope>
    <scope>MASS SPECTROMETRY</scope>
</reference>
<feature type="peptide" id="PRO_0000044496" description="Mu-conotoxin PnIVA">
    <location>
        <begin position="1"/>
        <end position="17"/>
    </location>
</feature>
<feature type="site" description="Important for binding and activity">
    <location>
        <position position="4"/>
    </location>
</feature>
<name>CM4A_CONPE</name>
<dbReference type="ConoServer" id="1560">
    <property type="toxin name" value="PnIVA"/>
</dbReference>
<dbReference type="GO" id="GO:0005576">
    <property type="term" value="C:extracellular region"/>
    <property type="evidence" value="ECO:0007669"/>
    <property type="project" value="UniProtKB-SubCell"/>
</dbReference>
<dbReference type="GO" id="GO:0017080">
    <property type="term" value="F:sodium channel regulator activity"/>
    <property type="evidence" value="ECO:0007669"/>
    <property type="project" value="UniProtKB-KW"/>
</dbReference>
<dbReference type="GO" id="GO:0090729">
    <property type="term" value="F:toxin activity"/>
    <property type="evidence" value="ECO:0007669"/>
    <property type="project" value="UniProtKB-KW"/>
</dbReference>
<proteinExistence type="evidence at protein level"/>
<sequence length="17" mass="1797">CCKYGWTCLLGCSPCGC</sequence>
<evidence type="ECO:0000250" key="1"/>
<evidence type="ECO:0000269" key="2">
    <source>
    </source>
</evidence>
<evidence type="ECO:0000305" key="3"/>
<keyword id="KW-0903">Direct protein sequencing</keyword>
<keyword id="KW-1015">Disulfide bond</keyword>
<keyword id="KW-0872">Ion channel impairing toxin</keyword>
<keyword id="KW-0528">Neurotoxin</keyword>
<keyword id="KW-0964">Secreted</keyword>
<keyword id="KW-0800">Toxin</keyword>
<keyword id="KW-0738">Voltage-gated sodium channel impairing toxin</keyword>